<keyword id="KW-0031">Aminopeptidase</keyword>
<keyword id="KW-0963">Cytoplasm</keyword>
<keyword id="KW-0378">Hydrolase</keyword>
<keyword id="KW-0464">Manganese</keyword>
<keyword id="KW-0479">Metal-binding</keyword>
<keyword id="KW-0645">Protease</keyword>
<keyword id="KW-1185">Reference proteome</keyword>
<protein>
    <recommendedName>
        <fullName evidence="1">Probable cytosol aminopeptidase</fullName>
        <ecNumber evidence="1">3.4.11.1</ecNumber>
    </recommendedName>
    <alternativeName>
        <fullName evidence="1">Leucine aminopeptidase</fullName>
        <shortName evidence="1">LAP</shortName>
        <ecNumber evidence="1">3.4.11.10</ecNumber>
    </alternativeName>
    <alternativeName>
        <fullName evidence="1">Leucyl aminopeptidase</fullName>
    </alternativeName>
</protein>
<proteinExistence type="inferred from homology"/>
<accession>A8LI79</accession>
<dbReference type="EC" id="3.4.11.1" evidence="1"/>
<dbReference type="EC" id="3.4.11.10" evidence="1"/>
<dbReference type="EMBL" id="CP000830">
    <property type="protein sequence ID" value="ABV92933.1"/>
    <property type="molecule type" value="Genomic_DNA"/>
</dbReference>
<dbReference type="RefSeq" id="WP_012177863.1">
    <property type="nucleotide sequence ID" value="NC_009952.1"/>
</dbReference>
<dbReference type="SMR" id="A8LI79"/>
<dbReference type="STRING" id="398580.Dshi_1191"/>
<dbReference type="KEGG" id="dsh:Dshi_1191"/>
<dbReference type="eggNOG" id="COG0260">
    <property type="taxonomic scope" value="Bacteria"/>
</dbReference>
<dbReference type="HOGENOM" id="CLU_013734_6_0_5"/>
<dbReference type="OrthoDB" id="9809354at2"/>
<dbReference type="Proteomes" id="UP000006833">
    <property type="component" value="Chromosome"/>
</dbReference>
<dbReference type="GO" id="GO:0005737">
    <property type="term" value="C:cytoplasm"/>
    <property type="evidence" value="ECO:0007669"/>
    <property type="project" value="UniProtKB-SubCell"/>
</dbReference>
<dbReference type="GO" id="GO:0030145">
    <property type="term" value="F:manganese ion binding"/>
    <property type="evidence" value="ECO:0007669"/>
    <property type="project" value="UniProtKB-UniRule"/>
</dbReference>
<dbReference type="GO" id="GO:0070006">
    <property type="term" value="F:metalloaminopeptidase activity"/>
    <property type="evidence" value="ECO:0007669"/>
    <property type="project" value="InterPro"/>
</dbReference>
<dbReference type="GO" id="GO:0006508">
    <property type="term" value="P:proteolysis"/>
    <property type="evidence" value="ECO:0007669"/>
    <property type="project" value="UniProtKB-KW"/>
</dbReference>
<dbReference type="CDD" id="cd00433">
    <property type="entry name" value="Peptidase_M17"/>
    <property type="match status" value="1"/>
</dbReference>
<dbReference type="Gene3D" id="3.40.220.10">
    <property type="entry name" value="Leucine Aminopeptidase, subunit E, domain 1"/>
    <property type="match status" value="1"/>
</dbReference>
<dbReference type="Gene3D" id="3.40.630.10">
    <property type="entry name" value="Zn peptidases"/>
    <property type="match status" value="1"/>
</dbReference>
<dbReference type="HAMAP" id="MF_00181">
    <property type="entry name" value="Cytosol_peptidase_M17"/>
    <property type="match status" value="1"/>
</dbReference>
<dbReference type="InterPro" id="IPR011356">
    <property type="entry name" value="Leucine_aapep/pepB"/>
</dbReference>
<dbReference type="InterPro" id="IPR043472">
    <property type="entry name" value="Macro_dom-like"/>
</dbReference>
<dbReference type="InterPro" id="IPR000819">
    <property type="entry name" value="Peptidase_M17_C"/>
</dbReference>
<dbReference type="InterPro" id="IPR023042">
    <property type="entry name" value="Peptidase_M17_leu_NH2_pept"/>
</dbReference>
<dbReference type="InterPro" id="IPR008283">
    <property type="entry name" value="Peptidase_M17_N"/>
</dbReference>
<dbReference type="NCBIfam" id="NF002075">
    <property type="entry name" value="PRK00913.2-2"/>
    <property type="match status" value="1"/>
</dbReference>
<dbReference type="NCBIfam" id="NF002077">
    <property type="entry name" value="PRK00913.2-4"/>
    <property type="match status" value="1"/>
</dbReference>
<dbReference type="PANTHER" id="PTHR11963:SF23">
    <property type="entry name" value="CYTOSOL AMINOPEPTIDASE"/>
    <property type="match status" value="1"/>
</dbReference>
<dbReference type="PANTHER" id="PTHR11963">
    <property type="entry name" value="LEUCINE AMINOPEPTIDASE-RELATED"/>
    <property type="match status" value="1"/>
</dbReference>
<dbReference type="Pfam" id="PF00883">
    <property type="entry name" value="Peptidase_M17"/>
    <property type="match status" value="1"/>
</dbReference>
<dbReference type="Pfam" id="PF02789">
    <property type="entry name" value="Peptidase_M17_N"/>
    <property type="match status" value="1"/>
</dbReference>
<dbReference type="PRINTS" id="PR00481">
    <property type="entry name" value="LAMNOPPTDASE"/>
</dbReference>
<dbReference type="SUPFAM" id="SSF52949">
    <property type="entry name" value="Macro domain-like"/>
    <property type="match status" value="1"/>
</dbReference>
<dbReference type="SUPFAM" id="SSF53187">
    <property type="entry name" value="Zn-dependent exopeptidases"/>
    <property type="match status" value="1"/>
</dbReference>
<dbReference type="PROSITE" id="PS00631">
    <property type="entry name" value="CYTOSOL_AP"/>
    <property type="match status" value="1"/>
</dbReference>
<name>AMPA_DINSH</name>
<evidence type="ECO:0000255" key="1">
    <source>
        <dbReference type="HAMAP-Rule" id="MF_00181"/>
    </source>
</evidence>
<comment type="function">
    <text evidence="1">Presumably involved in the processing and regular turnover of intracellular proteins. Catalyzes the removal of unsubstituted N-terminal amino acids from various peptides.</text>
</comment>
<comment type="catalytic activity">
    <reaction evidence="1">
        <text>Release of an N-terminal amino acid, Xaa-|-Yaa-, in which Xaa is preferably Leu, but may be other amino acids including Pro although not Arg or Lys, and Yaa may be Pro. Amino acid amides and methyl esters are also readily hydrolyzed, but rates on arylamides are exceedingly low.</text>
        <dbReference type="EC" id="3.4.11.1"/>
    </reaction>
</comment>
<comment type="catalytic activity">
    <reaction evidence="1">
        <text>Release of an N-terminal amino acid, preferentially leucine, but not glutamic or aspartic acids.</text>
        <dbReference type="EC" id="3.4.11.10"/>
    </reaction>
</comment>
<comment type="cofactor">
    <cofactor evidence="1">
        <name>Mn(2+)</name>
        <dbReference type="ChEBI" id="CHEBI:29035"/>
    </cofactor>
    <text evidence="1">Binds 2 manganese ions per subunit.</text>
</comment>
<comment type="subcellular location">
    <subcellularLocation>
        <location evidence="1">Cytoplasm</location>
    </subcellularLocation>
</comment>
<comment type="similarity">
    <text evidence="1">Belongs to the peptidase M17 family.</text>
</comment>
<reference key="1">
    <citation type="journal article" date="2010" name="ISME J.">
        <title>The complete genome sequence of the algal symbiont Dinoroseobacter shibae: a hitchhiker's guide to life in the sea.</title>
        <authorList>
            <person name="Wagner-Dobler I."/>
            <person name="Ballhausen B."/>
            <person name="Berger M."/>
            <person name="Brinkhoff T."/>
            <person name="Buchholz I."/>
            <person name="Bunk B."/>
            <person name="Cypionka H."/>
            <person name="Daniel R."/>
            <person name="Drepper T."/>
            <person name="Gerdts G."/>
            <person name="Hahnke S."/>
            <person name="Han C."/>
            <person name="Jahn D."/>
            <person name="Kalhoefer D."/>
            <person name="Kiss H."/>
            <person name="Klenk H.P."/>
            <person name="Kyrpides N."/>
            <person name="Liebl W."/>
            <person name="Liesegang H."/>
            <person name="Meincke L."/>
            <person name="Pati A."/>
            <person name="Petersen J."/>
            <person name="Piekarski T."/>
            <person name="Pommerenke C."/>
            <person name="Pradella S."/>
            <person name="Pukall R."/>
            <person name="Rabus R."/>
            <person name="Stackebrandt E."/>
            <person name="Thole S."/>
            <person name="Thompson L."/>
            <person name="Tielen P."/>
            <person name="Tomasch J."/>
            <person name="von Jan M."/>
            <person name="Wanphrut N."/>
            <person name="Wichels A."/>
            <person name="Zech H."/>
            <person name="Simon M."/>
        </authorList>
    </citation>
    <scope>NUCLEOTIDE SEQUENCE [LARGE SCALE GENOMIC DNA]</scope>
    <source>
        <strain>DSM 16493 / NCIMB 14021 / DFL 12</strain>
    </source>
</reference>
<feature type="chain" id="PRO_1000077274" description="Probable cytosol aminopeptidase">
    <location>
        <begin position="1"/>
        <end position="488"/>
    </location>
</feature>
<feature type="active site" evidence="1">
    <location>
        <position position="265"/>
    </location>
</feature>
<feature type="active site" evidence="1">
    <location>
        <position position="339"/>
    </location>
</feature>
<feature type="binding site" evidence="1">
    <location>
        <position position="253"/>
    </location>
    <ligand>
        <name>Mn(2+)</name>
        <dbReference type="ChEBI" id="CHEBI:29035"/>
        <label>2</label>
    </ligand>
</feature>
<feature type="binding site" evidence="1">
    <location>
        <position position="258"/>
    </location>
    <ligand>
        <name>Mn(2+)</name>
        <dbReference type="ChEBI" id="CHEBI:29035"/>
        <label>1</label>
    </ligand>
</feature>
<feature type="binding site" evidence="1">
    <location>
        <position position="258"/>
    </location>
    <ligand>
        <name>Mn(2+)</name>
        <dbReference type="ChEBI" id="CHEBI:29035"/>
        <label>2</label>
    </ligand>
</feature>
<feature type="binding site" evidence="1">
    <location>
        <position position="276"/>
    </location>
    <ligand>
        <name>Mn(2+)</name>
        <dbReference type="ChEBI" id="CHEBI:29035"/>
        <label>2</label>
    </ligand>
</feature>
<feature type="binding site" evidence="1">
    <location>
        <position position="335"/>
    </location>
    <ligand>
        <name>Mn(2+)</name>
        <dbReference type="ChEBI" id="CHEBI:29035"/>
        <label>1</label>
    </ligand>
</feature>
<feature type="binding site" evidence="1">
    <location>
        <position position="337"/>
    </location>
    <ligand>
        <name>Mn(2+)</name>
        <dbReference type="ChEBI" id="CHEBI:29035"/>
        <label>1</label>
    </ligand>
</feature>
<feature type="binding site" evidence="1">
    <location>
        <position position="337"/>
    </location>
    <ligand>
        <name>Mn(2+)</name>
        <dbReference type="ChEBI" id="CHEBI:29035"/>
        <label>2</label>
    </ligand>
</feature>
<sequence length="488" mass="50718">MTELAAVSFVYPDLDALAAETAKIAVLVPAEGTLNPGARRLNRLTKGAVARAVESAAFEKLKSGESLSLGYPAGMASDEVILVKLARNAKPLEARKAGAGLGKTLGKEGLLIWAAGLGQVAELAFGAALRAYRFDARKSKSEDALGPITVCATKRDEAEAAFADRRAVAEGVFFTRDLVNEPANVLTTTEFADRLTAMADLGLEVSVLEEADMEKLGMGALLGVGQGSESPSKIVVMKWMGGGDGAPFALVGKGVVFDTGGISIKPSAGMEDMTMDMGGAGVVAGVMRTLALRKAKANVVGLVGLVENMPDGKAQRPGDVVTSMKGDTIEVINTDAEGRLVLADVMWYAQEEFKPCAMIDLATLTGAIIIGLGHENAGVFSNSDDLSGAFLKAATAEGEGAWRMPMGPAYDKLIKSRVADIKNVGGRAAGSITAAQFLGRFVKDETPWCHLDIAGTASVSSATDYAPAGATGWGVRALDRLIRDGYEG</sequence>
<gene>
    <name evidence="1" type="primary">pepA</name>
    <name type="ordered locus">Dshi_1191</name>
</gene>
<organism>
    <name type="scientific">Dinoroseobacter shibae (strain DSM 16493 / NCIMB 14021 / DFL 12)</name>
    <dbReference type="NCBI Taxonomy" id="398580"/>
    <lineage>
        <taxon>Bacteria</taxon>
        <taxon>Pseudomonadati</taxon>
        <taxon>Pseudomonadota</taxon>
        <taxon>Alphaproteobacteria</taxon>
        <taxon>Rhodobacterales</taxon>
        <taxon>Roseobacteraceae</taxon>
        <taxon>Dinoroseobacter</taxon>
    </lineage>
</organism>